<reference key="1">
    <citation type="journal article" date="2002" name="Am. J. Bot.">
        <title>Phylogenetic relationships in the cactus family (Cactaceae) based on evidence from trnK/matK and trnL-trnF sequences.</title>
        <authorList>
            <person name="Nyffeler R."/>
        </authorList>
        <dbReference type="AGRICOLA" id="IND23311510"/>
    </citation>
    <scope>NUCLEOTIDE SEQUENCE [GENOMIC DNA]</scope>
    <source>
        <strain>GrabraE261</strain>
    </source>
</reference>
<keyword id="KW-0150">Chloroplast</keyword>
<keyword id="KW-0507">mRNA processing</keyword>
<keyword id="KW-0934">Plastid</keyword>
<keyword id="KW-0694">RNA-binding</keyword>
<keyword id="KW-0819">tRNA processing</keyword>
<sequence length="510" mass="61146">MKEFQRYIELDRSWQHNFFYPLIFQEYIYGFAYDPDLKKSILLENAGDKKYSLLIVKRLITRMYQQQNHLILFANHSNQNDFWGHKHTNNLYYQIISEVFAFIVEIPFSLLLISSLESKKRKIVKSHNLRSIHSIFPFFEDKFLHLNYVLEILIPYPIHLEILVQTLRYWMKDASSLHLLRFFLYEYRNWNSLITSQKSISIFSKRNKRLFLFLYNFHVCEYESIFVFFCNQSSHLRSTSFGVLLERIYFYGKLEYLVKVFPFTKDFRLILWLFKEPFPHYVRYRGKSILASKGTSLLMHKWKYYLINFWQCYFSLWSQPTRIYINQLSKHSLDFMGFFSSVQLNSSVVRSQMVENSFLIENTMKKFDTIVRIIPLVGSLAKANFCNVLGHPISKSVWTDLLDSDIIDRFGCICRNLSHYYSGSSRKKTLYRIKYILRLSCARTLARKHKSTVRAFLKRLGSEFLEEFFTEEEKVLSLILPRDSSIARGFYRGPIWYLDIICIHDLANDE</sequence>
<feature type="chain" id="PRO_0000143409" description="Maturase K">
    <location>
        <begin position="1"/>
        <end position="510"/>
    </location>
</feature>
<accession>Q95EE5</accession>
<dbReference type="EMBL" id="AY015273">
    <property type="protein sequence ID" value="AAK19760.1"/>
    <property type="molecule type" value="Genomic_DNA"/>
</dbReference>
<dbReference type="GO" id="GO:0009507">
    <property type="term" value="C:chloroplast"/>
    <property type="evidence" value="ECO:0007669"/>
    <property type="project" value="UniProtKB-SubCell"/>
</dbReference>
<dbReference type="GO" id="GO:0003723">
    <property type="term" value="F:RNA binding"/>
    <property type="evidence" value="ECO:0007669"/>
    <property type="project" value="UniProtKB-KW"/>
</dbReference>
<dbReference type="GO" id="GO:0006397">
    <property type="term" value="P:mRNA processing"/>
    <property type="evidence" value="ECO:0007669"/>
    <property type="project" value="UniProtKB-KW"/>
</dbReference>
<dbReference type="GO" id="GO:0008380">
    <property type="term" value="P:RNA splicing"/>
    <property type="evidence" value="ECO:0007669"/>
    <property type="project" value="UniProtKB-UniRule"/>
</dbReference>
<dbReference type="GO" id="GO:0008033">
    <property type="term" value="P:tRNA processing"/>
    <property type="evidence" value="ECO:0007669"/>
    <property type="project" value="UniProtKB-KW"/>
</dbReference>
<dbReference type="HAMAP" id="MF_01390">
    <property type="entry name" value="MatK"/>
    <property type="match status" value="1"/>
</dbReference>
<dbReference type="InterPro" id="IPR024937">
    <property type="entry name" value="Domain_X"/>
</dbReference>
<dbReference type="InterPro" id="IPR002866">
    <property type="entry name" value="Maturase_MatK"/>
</dbReference>
<dbReference type="InterPro" id="IPR024942">
    <property type="entry name" value="Maturase_MatK_N"/>
</dbReference>
<dbReference type="PANTHER" id="PTHR34811">
    <property type="entry name" value="MATURASE K"/>
    <property type="match status" value="1"/>
</dbReference>
<dbReference type="PANTHER" id="PTHR34811:SF1">
    <property type="entry name" value="MATURASE K"/>
    <property type="match status" value="1"/>
</dbReference>
<dbReference type="Pfam" id="PF01348">
    <property type="entry name" value="Intron_maturas2"/>
    <property type="match status" value="1"/>
</dbReference>
<dbReference type="Pfam" id="PF01824">
    <property type="entry name" value="MatK_N"/>
    <property type="match status" value="1"/>
</dbReference>
<geneLocation type="chloroplast"/>
<name>MATK_GRABR</name>
<organism>
    <name type="scientific">Grahamia bracteata</name>
    <dbReference type="NCBI Taxonomy" id="107618"/>
    <lineage>
        <taxon>Eukaryota</taxon>
        <taxon>Viridiplantae</taxon>
        <taxon>Streptophyta</taxon>
        <taxon>Embryophyta</taxon>
        <taxon>Tracheophyta</taxon>
        <taxon>Spermatophyta</taxon>
        <taxon>Magnoliopsida</taxon>
        <taxon>eudicotyledons</taxon>
        <taxon>Gunneridae</taxon>
        <taxon>Pentapetalae</taxon>
        <taxon>Caryophyllales</taxon>
        <taxon>Cactineae</taxon>
        <taxon>Anacampserotaceae</taxon>
        <taxon>Grahamia</taxon>
    </lineage>
</organism>
<proteinExistence type="inferred from homology"/>
<protein>
    <recommendedName>
        <fullName evidence="1">Maturase K</fullName>
    </recommendedName>
    <alternativeName>
        <fullName evidence="1">Intron maturase</fullName>
    </alternativeName>
</protein>
<evidence type="ECO:0000255" key="1">
    <source>
        <dbReference type="HAMAP-Rule" id="MF_01390"/>
    </source>
</evidence>
<gene>
    <name evidence="1" type="primary">matK</name>
</gene>
<comment type="function">
    <text evidence="1">Usually encoded in the trnK tRNA gene intron. Probably assists in splicing its own and other chloroplast group II introns.</text>
</comment>
<comment type="subcellular location">
    <subcellularLocation>
        <location>Plastid</location>
        <location>Chloroplast</location>
    </subcellularLocation>
</comment>
<comment type="similarity">
    <text evidence="1">Belongs to the intron maturase 2 family. MatK subfamily.</text>
</comment>